<comment type="function">
    <text evidence="1">One of the primary rRNA binding proteins. Required for association of the 30S and 50S subunits to form the 70S ribosome, for tRNA binding and peptide bond formation. It has been suggested to have peptidyltransferase activity; this is somewhat controversial. Makes several contacts with the 16S rRNA in the 70S ribosome.</text>
</comment>
<comment type="subunit">
    <text evidence="1">Part of the 50S ribosomal subunit. Forms a bridge to the 30S subunit in the 70S ribosome.</text>
</comment>
<comment type="similarity">
    <text evidence="1">Belongs to the universal ribosomal protein uL2 family.</text>
</comment>
<organism>
    <name type="scientific">Limosilactobacillus fermentum (strain NBRC 3956 / LMG 18251)</name>
    <name type="common">Lactobacillus fermentum</name>
    <dbReference type="NCBI Taxonomy" id="334390"/>
    <lineage>
        <taxon>Bacteria</taxon>
        <taxon>Bacillati</taxon>
        <taxon>Bacillota</taxon>
        <taxon>Bacilli</taxon>
        <taxon>Lactobacillales</taxon>
        <taxon>Lactobacillaceae</taxon>
        <taxon>Limosilactobacillus</taxon>
    </lineage>
</organism>
<keyword id="KW-1185">Reference proteome</keyword>
<keyword id="KW-0687">Ribonucleoprotein</keyword>
<keyword id="KW-0689">Ribosomal protein</keyword>
<keyword id="KW-0694">RNA-binding</keyword>
<keyword id="KW-0699">rRNA-binding</keyword>
<accession>B2GDW6</accession>
<sequence length="281" mass="30333">MGIRKYKGTTNGRRNMNGYDFAEITKTTPEKSLLAPLKHTAGRNNAGKMTVRHRGGGTKRQYRIIDFKRIKDDVPATVKAIEYDPNRTANIALLGYADGTKSYILAPKGLKVGMTVQSGPDADIKVGNTLPLKNIPVGTVIHNIELKPGKGGQLTRSAGTSAQLLGKEEKYVLVRLSSGEVRMILAACRATIGSIGNDEHGLLVKGKAGRSRYAGQRPHVRGSVMNPNDHPHGGGEGKAPVGLPSPLSPWGKKTVGKKTRSHKARSNKFIVRGRKRGPHTR</sequence>
<proteinExistence type="inferred from homology"/>
<gene>
    <name evidence="1" type="primary">rplB</name>
    <name type="ordered locus">LAF_1512</name>
</gene>
<evidence type="ECO:0000255" key="1">
    <source>
        <dbReference type="HAMAP-Rule" id="MF_01320"/>
    </source>
</evidence>
<evidence type="ECO:0000256" key="2">
    <source>
        <dbReference type="SAM" id="MobiDB-lite"/>
    </source>
</evidence>
<evidence type="ECO:0000305" key="3"/>
<reference key="1">
    <citation type="journal article" date="2008" name="DNA Res.">
        <title>Comparative genome analysis of Lactobacillus reuteri and Lactobacillus fermentum reveal a genomic island for reuterin and cobalamin production.</title>
        <authorList>
            <person name="Morita H."/>
            <person name="Toh H."/>
            <person name="Fukuda S."/>
            <person name="Horikawa H."/>
            <person name="Oshima K."/>
            <person name="Suzuki T."/>
            <person name="Murakami M."/>
            <person name="Hisamatsu S."/>
            <person name="Kato Y."/>
            <person name="Takizawa T."/>
            <person name="Fukuoka H."/>
            <person name="Yoshimura T."/>
            <person name="Itoh K."/>
            <person name="O'Sullivan D.J."/>
            <person name="McKay L.L."/>
            <person name="Ohno H."/>
            <person name="Kikuchi J."/>
            <person name="Masaoka T."/>
            <person name="Hattori M."/>
        </authorList>
    </citation>
    <scope>NUCLEOTIDE SEQUENCE [LARGE SCALE GENOMIC DNA]</scope>
    <source>
        <strain>NBRC 3956 / LMG 18251</strain>
    </source>
</reference>
<name>RL2_LIMF3</name>
<feature type="chain" id="PRO_1000141570" description="Large ribosomal subunit protein uL2">
    <location>
        <begin position="1"/>
        <end position="281"/>
    </location>
</feature>
<feature type="region of interest" description="Disordered" evidence="2">
    <location>
        <begin position="208"/>
        <end position="281"/>
    </location>
</feature>
<feature type="compositionally biased region" description="Basic residues" evidence="2">
    <location>
        <begin position="254"/>
        <end position="281"/>
    </location>
</feature>
<dbReference type="EMBL" id="AP008937">
    <property type="protein sequence ID" value="BAG27848.1"/>
    <property type="molecule type" value="Genomic_DNA"/>
</dbReference>
<dbReference type="RefSeq" id="WP_004562960.1">
    <property type="nucleotide sequence ID" value="NC_010610.1"/>
</dbReference>
<dbReference type="SMR" id="B2GDW6"/>
<dbReference type="GeneID" id="83716111"/>
<dbReference type="KEGG" id="lfe:LAF_1512"/>
<dbReference type="eggNOG" id="COG0090">
    <property type="taxonomic scope" value="Bacteria"/>
</dbReference>
<dbReference type="HOGENOM" id="CLU_036235_2_1_9"/>
<dbReference type="Proteomes" id="UP000001697">
    <property type="component" value="Chromosome"/>
</dbReference>
<dbReference type="GO" id="GO:0015934">
    <property type="term" value="C:large ribosomal subunit"/>
    <property type="evidence" value="ECO:0007669"/>
    <property type="project" value="InterPro"/>
</dbReference>
<dbReference type="GO" id="GO:0019843">
    <property type="term" value="F:rRNA binding"/>
    <property type="evidence" value="ECO:0007669"/>
    <property type="project" value="UniProtKB-UniRule"/>
</dbReference>
<dbReference type="GO" id="GO:0003735">
    <property type="term" value="F:structural constituent of ribosome"/>
    <property type="evidence" value="ECO:0007669"/>
    <property type="project" value="InterPro"/>
</dbReference>
<dbReference type="GO" id="GO:0016740">
    <property type="term" value="F:transferase activity"/>
    <property type="evidence" value="ECO:0007669"/>
    <property type="project" value="InterPro"/>
</dbReference>
<dbReference type="GO" id="GO:0002181">
    <property type="term" value="P:cytoplasmic translation"/>
    <property type="evidence" value="ECO:0007669"/>
    <property type="project" value="TreeGrafter"/>
</dbReference>
<dbReference type="FunFam" id="2.30.30.30:FF:000001">
    <property type="entry name" value="50S ribosomal protein L2"/>
    <property type="match status" value="1"/>
</dbReference>
<dbReference type="FunFam" id="2.40.50.140:FF:000003">
    <property type="entry name" value="50S ribosomal protein L2"/>
    <property type="match status" value="1"/>
</dbReference>
<dbReference type="FunFam" id="4.10.950.10:FF:000001">
    <property type="entry name" value="50S ribosomal protein L2"/>
    <property type="match status" value="1"/>
</dbReference>
<dbReference type="Gene3D" id="2.30.30.30">
    <property type="match status" value="1"/>
</dbReference>
<dbReference type="Gene3D" id="2.40.50.140">
    <property type="entry name" value="Nucleic acid-binding proteins"/>
    <property type="match status" value="1"/>
</dbReference>
<dbReference type="Gene3D" id="4.10.950.10">
    <property type="entry name" value="Ribosomal protein L2, domain 3"/>
    <property type="match status" value="1"/>
</dbReference>
<dbReference type="HAMAP" id="MF_01320_B">
    <property type="entry name" value="Ribosomal_uL2_B"/>
    <property type="match status" value="1"/>
</dbReference>
<dbReference type="InterPro" id="IPR012340">
    <property type="entry name" value="NA-bd_OB-fold"/>
</dbReference>
<dbReference type="InterPro" id="IPR014722">
    <property type="entry name" value="Rib_uL2_dom2"/>
</dbReference>
<dbReference type="InterPro" id="IPR002171">
    <property type="entry name" value="Ribosomal_uL2"/>
</dbReference>
<dbReference type="InterPro" id="IPR005880">
    <property type="entry name" value="Ribosomal_uL2_bac/org-type"/>
</dbReference>
<dbReference type="InterPro" id="IPR022669">
    <property type="entry name" value="Ribosomal_uL2_C"/>
</dbReference>
<dbReference type="InterPro" id="IPR022671">
    <property type="entry name" value="Ribosomal_uL2_CS"/>
</dbReference>
<dbReference type="InterPro" id="IPR014726">
    <property type="entry name" value="Ribosomal_uL2_dom3"/>
</dbReference>
<dbReference type="InterPro" id="IPR022666">
    <property type="entry name" value="Ribosomal_uL2_RNA-bd_dom"/>
</dbReference>
<dbReference type="InterPro" id="IPR008991">
    <property type="entry name" value="Translation_prot_SH3-like_sf"/>
</dbReference>
<dbReference type="NCBIfam" id="TIGR01171">
    <property type="entry name" value="rplB_bact"/>
    <property type="match status" value="1"/>
</dbReference>
<dbReference type="PANTHER" id="PTHR13691:SF5">
    <property type="entry name" value="LARGE RIBOSOMAL SUBUNIT PROTEIN UL2M"/>
    <property type="match status" value="1"/>
</dbReference>
<dbReference type="PANTHER" id="PTHR13691">
    <property type="entry name" value="RIBOSOMAL PROTEIN L2"/>
    <property type="match status" value="1"/>
</dbReference>
<dbReference type="Pfam" id="PF00181">
    <property type="entry name" value="Ribosomal_L2"/>
    <property type="match status" value="1"/>
</dbReference>
<dbReference type="Pfam" id="PF03947">
    <property type="entry name" value="Ribosomal_L2_C"/>
    <property type="match status" value="1"/>
</dbReference>
<dbReference type="PIRSF" id="PIRSF002158">
    <property type="entry name" value="Ribosomal_L2"/>
    <property type="match status" value="1"/>
</dbReference>
<dbReference type="SMART" id="SM01383">
    <property type="entry name" value="Ribosomal_L2"/>
    <property type="match status" value="1"/>
</dbReference>
<dbReference type="SMART" id="SM01382">
    <property type="entry name" value="Ribosomal_L2_C"/>
    <property type="match status" value="1"/>
</dbReference>
<dbReference type="SUPFAM" id="SSF50249">
    <property type="entry name" value="Nucleic acid-binding proteins"/>
    <property type="match status" value="1"/>
</dbReference>
<dbReference type="SUPFAM" id="SSF50104">
    <property type="entry name" value="Translation proteins SH3-like domain"/>
    <property type="match status" value="1"/>
</dbReference>
<dbReference type="PROSITE" id="PS00467">
    <property type="entry name" value="RIBOSOMAL_L2"/>
    <property type="match status" value="1"/>
</dbReference>
<protein>
    <recommendedName>
        <fullName evidence="1">Large ribosomal subunit protein uL2</fullName>
    </recommendedName>
    <alternativeName>
        <fullName evidence="3">50S ribosomal protein L2</fullName>
    </alternativeName>
</protein>